<comment type="function">
    <text evidence="2">Catalytic subunit of the Rab3 GTPase-activating (Rab3GAP) complex composed of rab3gap1 and rab3gap2, which has GTPase-activating protein (GAP) activity towards various Rab3 subfamily members (RAB3A, RAB3B, RAB3C and RAB3D), RAB5A and RAB43, and guanine nucleotide exchange factor (GEF) activity towards RAB18. As part of the Rab3GAP complex, acts as a GAP for Rab3 proteins by converting active RAB3-GTP to the inactive form RAB3-GDP. Rab3 proteins are involved in regulated exocytosis of neurotransmitters and hormones. The Rab3GAP complex, acts as a GEF for RAB18 by promoting the conversion of inactive RAB18-GDP to the active form RAB18-GTP. Recruits and stabilizes RAB18 at the cis-Golgi membrane where RAB18 is most likely activated. Also involved in RAB18 recruitment at the endoplasmic reticulum (ER) membrane where it maintains proper ER structure. Required for normal eye and brain development. May participate in neurodevelopmental processes such as proliferation, migration and differentiation before synapse formation, and non-synaptic vesicular release of neurotransmitters.</text>
</comment>
<comment type="subunit">
    <text evidence="1 2">The Rab3 GTPase-activating complex is a heterodimer composed of rab3gap1 and rab3gap2 (By similarity). The Rab3 GTPase-activating complex interacts with DMXL2 (By similarity). Interacts with LMAN1 (By similarity).</text>
</comment>
<comment type="subcellular location">
    <subcellularLocation>
        <location evidence="2">Cytoplasm</location>
    </subcellularLocation>
    <subcellularLocation>
        <location evidence="2">Endoplasmic reticulum</location>
    </subcellularLocation>
    <subcellularLocation>
        <location evidence="2">Golgi apparatus</location>
        <location evidence="2">cis-Golgi network</location>
    </subcellularLocation>
    <text evidence="2">In neurons, it is enriched in the synaptic soluble fraction.</text>
</comment>
<comment type="similarity">
    <text evidence="4">Belongs to the Rab3-GAP catalytic subunit family.</text>
</comment>
<protein>
    <recommendedName>
        <fullName>Rab3 GTPase-activating protein catalytic subunit</fullName>
    </recommendedName>
</protein>
<evidence type="ECO:0000250" key="1">
    <source>
        <dbReference type="UniProtKB" id="P69735"/>
    </source>
</evidence>
<evidence type="ECO:0000250" key="2">
    <source>
        <dbReference type="UniProtKB" id="Q15042"/>
    </source>
</evidence>
<evidence type="ECO:0000256" key="3">
    <source>
        <dbReference type="SAM" id="MobiDB-lite"/>
    </source>
</evidence>
<evidence type="ECO:0000305" key="4"/>
<feature type="chain" id="PRO_0000191659" description="Rab3 GTPase-activating protein catalytic subunit">
    <location>
        <begin position="1"/>
        <end position="978"/>
    </location>
</feature>
<feature type="region of interest" description="Disordered" evidence="3">
    <location>
        <begin position="533"/>
        <end position="554"/>
    </location>
</feature>
<feature type="region of interest" description="Disordered" evidence="3">
    <location>
        <begin position="586"/>
        <end position="621"/>
    </location>
</feature>
<feature type="region of interest" description="Disordered" evidence="3">
    <location>
        <begin position="908"/>
        <end position="936"/>
    </location>
</feature>
<feature type="compositionally biased region" description="Polar residues" evidence="3">
    <location>
        <begin position="540"/>
        <end position="554"/>
    </location>
</feature>
<feature type="compositionally biased region" description="Basic and acidic residues" evidence="3">
    <location>
        <begin position="586"/>
        <end position="619"/>
    </location>
</feature>
<feature type="compositionally biased region" description="Basic and acidic residues" evidence="3">
    <location>
        <begin position="909"/>
        <end position="922"/>
    </location>
</feature>
<sequence>MAADSDPESEVFEITDFTTASEWERFISKVEEVLTEWKLIGETSNKPPEKGEYTSGVWEEKGEEVLFADFRFSIRHHYLVQKSSEKEEKEDTGEDSIPVCMQDLLCTNNDFPPVAHCLVRWYGLREFVVISPGANDAVISESKCNLLLSSVSIALGNTGCQVPLFVQVHQKWRKLYVGECRGPGVRTDFEMVHLRKVPNQYTHLSGLLDIFKSKIGCPLTALPPVNIAIRFTYVLQDWQQYFWPQQPPDIDALIGGEVGGLEFGKLPFGACEDPISELHLATTWPCLTEGIIVDNDVYSDLDPLQAPQWSVRVRKADNPQCMLGDFVSEFFRLCRRKESTDELLGKSAFEENGKEGADISQALSKLTEPAPVPIHKLSVTSMVHSARKKIRKHRGADESPLNNDVLNAILFFLFPDTKSLDGSEAKPSTSTGNISSQSESEDYNLYSQLKSAPSNSLTYKLALCLCMVNFYHGGVKGVAHLWQEFVLEMRYRWENNFLIPGLANGSPDLKCCLLHQKLQMLNCCLERKKARDEGKKGNPLYSSSESSVNKTASDLLSPVEADKSKYEVAKSWDSWSDSEEEFFECHSDTEELKESGQESARKAKEETKENPSPKPEGRLHQSGNLMLLNSGEPLYIPVTQDPAPMTDDLLEEQSEVLAKLGTSAEGAHLRARMQSACLLSDMESFKAANPGCCLEDFVRWYSPRDYIEEEVMDDKGNKIFKGELSARMKIPNNMWVEAWETAKPIPARRQRRLFDDTKEAEKVLHYLAVQKPADLTRHLLPCVIHAALLKLKEEEAAEDIPSGRKAIKQIISHSSKVLRFPSPDDKKLEDVISQISNVEAAIARARSLKAKFAIDRCEKSEEREDLEKFVSCLLDQPEVPIIGAGRGAAGTIIHKMFVQRALTLAPVEEEPKRSSSSDDRRQTSGTDFPSPAGRELILRTSVPRPAPYSKVLPQRMYSVLTKEDFRLTGAFSSDTSFF</sequence>
<gene>
    <name type="primary">rab3gap1</name>
    <name type="synonym">rab3gap</name>
</gene>
<dbReference type="EMBL" id="BC081089">
    <property type="protein sequence ID" value="AAH81089.1"/>
    <property type="molecule type" value="mRNA"/>
</dbReference>
<dbReference type="RefSeq" id="NP_001087691.1">
    <property type="nucleotide sequence ID" value="NM_001094222.1"/>
</dbReference>
<dbReference type="SMR" id="Q642R9"/>
<dbReference type="DNASU" id="447515"/>
<dbReference type="GeneID" id="447515"/>
<dbReference type="KEGG" id="xla:447515"/>
<dbReference type="AGR" id="Xenbase:XB-GENE-995564"/>
<dbReference type="CTD" id="447515"/>
<dbReference type="Xenbase" id="XB-GENE-995564">
    <property type="gene designation" value="rab3gap1.L"/>
</dbReference>
<dbReference type="OrthoDB" id="17346at2759"/>
<dbReference type="Proteomes" id="UP000186698">
    <property type="component" value="Chromosome 9_10L"/>
</dbReference>
<dbReference type="Bgee" id="447515">
    <property type="expression patterns" value="Expressed in brain and 20 other cell types or tissues"/>
</dbReference>
<dbReference type="GO" id="GO:0005801">
    <property type="term" value="C:cis-Golgi network"/>
    <property type="evidence" value="ECO:0000250"/>
    <property type="project" value="UniProtKB"/>
</dbReference>
<dbReference type="GO" id="GO:0005783">
    <property type="term" value="C:endoplasmic reticulum"/>
    <property type="evidence" value="ECO:0007669"/>
    <property type="project" value="UniProtKB-SubCell"/>
</dbReference>
<dbReference type="GO" id="GO:0005096">
    <property type="term" value="F:GTPase activator activity"/>
    <property type="evidence" value="ECO:0000318"/>
    <property type="project" value="GO_Central"/>
</dbReference>
<dbReference type="GO" id="GO:0005085">
    <property type="term" value="F:guanyl-nucleotide exchange factor activity"/>
    <property type="evidence" value="ECO:0000250"/>
    <property type="project" value="UniProtKB"/>
</dbReference>
<dbReference type="GO" id="GO:0007420">
    <property type="term" value="P:brain development"/>
    <property type="evidence" value="ECO:0000318"/>
    <property type="project" value="GO_Central"/>
</dbReference>
<dbReference type="GO" id="GO:2000786">
    <property type="term" value="P:positive regulation of autophagosome assembly"/>
    <property type="evidence" value="ECO:0000318"/>
    <property type="project" value="GO_Central"/>
</dbReference>
<dbReference type="InterPro" id="IPR045700">
    <property type="entry name" value="Rab3GAP1"/>
</dbReference>
<dbReference type="InterPro" id="IPR045698">
    <property type="entry name" value="Rab3GAP1_C"/>
</dbReference>
<dbReference type="InterPro" id="IPR026147">
    <property type="entry name" value="Rab3GAP1_conserved"/>
</dbReference>
<dbReference type="PANTHER" id="PTHR21422">
    <property type="entry name" value="RAB3 GTPASE-ACTIVATING PROTEIN CATALYTIC SUBUNIT"/>
    <property type="match status" value="1"/>
</dbReference>
<dbReference type="PANTHER" id="PTHR21422:SF9">
    <property type="entry name" value="RAB3 GTPASE-ACTIVATING PROTEIN CATALYTIC SUBUNIT"/>
    <property type="match status" value="1"/>
</dbReference>
<dbReference type="Pfam" id="PF19533">
    <property type="entry name" value="Rab3-GAP_cat_C"/>
    <property type="match status" value="1"/>
</dbReference>
<dbReference type="Pfam" id="PF13890">
    <property type="entry name" value="Rab3-GTPase_cat"/>
    <property type="match status" value="1"/>
</dbReference>
<name>RB3GP_XENLA</name>
<proteinExistence type="evidence at transcript level"/>
<reference key="1">
    <citation type="submission" date="2004-08" db="EMBL/GenBank/DDBJ databases">
        <authorList>
            <consortium name="NIH - Xenopus Gene Collection (XGC) project"/>
        </authorList>
    </citation>
    <scope>NUCLEOTIDE SEQUENCE [LARGE SCALE MRNA]</scope>
    <source>
        <tissue>Ovary</tissue>
    </source>
</reference>
<accession>Q642R9</accession>
<organism>
    <name type="scientific">Xenopus laevis</name>
    <name type="common">African clawed frog</name>
    <dbReference type="NCBI Taxonomy" id="8355"/>
    <lineage>
        <taxon>Eukaryota</taxon>
        <taxon>Metazoa</taxon>
        <taxon>Chordata</taxon>
        <taxon>Craniata</taxon>
        <taxon>Vertebrata</taxon>
        <taxon>Euteleostomi</taxon>
        <taxon>Amphibia</taxon>
        <taxon>Batrachia</taxon>
        <taxon>Anura</taxon>
        <taxon>Pipoidea</taxon>
        <taxon>Pipidae</taxon>
        <taxon>Xenopodinae</taxon>
        <taxon>Xenopus</taxon>
        <taxon>Xenopus</taxon>
    </lineage>
</organism>
<keyword id="KW-0963">Cytoplasm</keyword>
<keyword id="KW-0256">Endoplasmic reticulum</keyword>
<keyword id="KW-0333">Golgi apparatus</keyword>
<keyword id="KW-0343">GTPase activation</keyword>
<keyword id="KW-1185">Reference proteome</keyword>